<accession>Q8DHJ2</accession>
<keyword id="KW-0002">3D-structure</keyword>
<keyword id="KW-0903">Direct protein sequencing</keyword>
<keyword id="KW-0291">Formylation</keyword>
<keyword id="KW-0472">Membrane</keyword>
<keyword id="KW-0602">Photosynthesis</keyword>
<keyword id="KW-0604">Photosystem II</keyword>
<keyword id="KW-0674">Reaction center</keyword>
<keyword id="KW-1185">Reference proteome</keyword>
<keyword id="KW-0793">Thylakoid</keyword>
<keyword id="KW-0812">Transmembrane</keyword>
<keyword id="KW-1133">Transmembrane helix</keyword>
<comment type="function">
    <text evidence="1 5 7 8 11">May control the interaction of photosystem II (PSII) cores with the light-harvesting antenna, regulates electron flow through the 2 photosystem reaction centers. PSII is a light-driven water plastoquinone oxidoreductase, using light energy to abstract electrons from H(2)O, generating a proton gradient subsequently used for ATP formation.</text>
</comment>
<comment type="function">
    <text evidence="5">May also aid in binding of PsbK, Psb30/Ycf12 and the oxygen-evolving complex to PSII, at least in vitro (PubMed:17967798).</text>
</comment>
<comment type="cofactor">
    <text evidence="2 3 4 5 6 7 8 9 10 11 12">PSII binds multiple chlorophylls, carotenoids and specific lipids.</text>
</comment>
<comment type="subunit">
    <text evidence="1 2 3 4 5 6 7 8 9 10 11 12 13">PSII is composed of 1 copy each of membrane proteins PsbA, PsbB, PsbC, PsbD, PsbE, PsbF, PsbH, PsbI, PsbJ, PsbK, PsbL, PsbM, PsbT, PsbX, PsbY, PsbZ, Psb30/Ycf12, peripheral proteins PsbO, CyanoQ (PsbQ), PsbU, PsbV and a large number of cofactors. It forms dimeric complexes (By similarity) (PubMed:14764885, PubMed:16355230, PubMed:17935689, PubMed:17967798, PubMed:19219048, PubMed:20558739, PubMed:21367867, PubMed:22665786, PubMed:23413188, PubMed:25006873, PubMed:25043005). Part of a photosystem II (PSII) assembly intermediate complex PSII-I; crystallized from a strain deleted of psbJ, it forms monomeric PSII before addition of the oxygen evolving complex. PSII-I includes 3 assembly factors not found in mature PSII (Psb27, Psb28 and Psb34) (PubMed:33846594).</text>
</comment>
<comment type="subcellular location">
    <subcellularLocation>
        <location evidence="1 2 3 4 5 6 7 8 9 10 11 12 13">Cellular thylakoid membrane</location>
        <topology evidence="1 2 3 4 5 6 7 8 9 10 11 12 13">Multi-pass membrane protein</topology>
    </subcellularLocation>
</comment>
<comment type="mass spectrometry" mass="6798.0" error="5.0" method="MALDI" evidence="6"/>
<comment type="mass spectrometry" mass="6793.0" method="MALDI" evidence="7"/>
<comment type="disruption phenotype">
    <text evidence="5">Cells grow normally under all light regimes tested; it is dispensable for photoautotrophic growth. The deletion strain is more tolerant to photoinhibition, while isolated PSII complex contains less PsbK and Psb30/Ycf12 than wild-type and also has reduced oxygen-evolving capacity.</text>
</comment>
<comment type="similarity">
    <text evidence="1">Belongs to the PsbZ family.</text>
</comment>
<evidence type="ECO:0000255" key="1">
    <source>
        <dbReference type="HAMAP-Rule" id="MF_00644"/>
    </source>
</evidence>
<evidence type="ECO:0000269" key="2">
    <source>
    </source>
</evidence>
<evidence type="ECO:0000269" key="3">
    <source>
    </source>
</evidence>
<evidence type="ECO:0000269" key="4">
    <source>
    </source>
</evidence>
<evidence type="ECO:0000269" key="5">
    <source>
    </source>
</evidence>
<evidence type="ECO:0000269" key="6">
    <source>
    </source>
</evidence>
<evidence type="ECO:0000269" key="7">
    <source>
    </source>
</evidence>
<evidence type="ECO:0000269" key="8">
    <source>
    </source>
</evidence>
<evidence type="ECO:0000269" key="9">
    <source>
    </source>
</evidence>
<evidence type="ECO:0000269" key="10">
    <source>
    </source>
</evidence>
<evidence type="ECO:0000269" key="11">
    <source>
    </source>
</evidence>
<evidence type="ECO:0000269" key="12">
    <source>
    </source>
</evidence>
<evidence type="ECO:0000269" key="13">
    <source>
    </source>
</evidence>
<evidence type="ECO:0000312" key="14">
    <source>
        <dbReference type="PDB" id="1S5L"/>
    </source>
</evidence>
<evidence type="ECO:0007744" key="15">
    <source>
        <dbReference type="PDB" id="7NHO"/>
    </source>
</evidence>
<evidence type="ECO:0007744" key="16">
    <source>
        <dbReference type="PDB" id="7NHP"/>
    </source>
</evidence>
<evidence type="ECO:0007744" key="17">
    <source>
        <dbReference type="PDB" id="7NHQ"/>
    </source>
</evidence>
<evidence type="ECO:0007829" key="18">
    <source>
        <dbReference type="PDB" id="7YQ2"/>
    </source>
</evidence>
<evidence type="ECO:0007829" key="19">
    <source>
        <dbReference type="PDB" id="8F4J"/>
    </source>
</evidence>
<gene>
    <name evidence="1" type="primary">psbZ</name>
    <name type="ordered locus">tsr1967</name>
</gene>
<protein>
    <recommendedName>
        <fullName evidence="1">Photosystem II reaction center protein Z</fullName>
        <shortName evidence="1">PSII-Z</shortName>
    </recommendedName>
</protein>
<name>PSBZ_THEVB</name>
<sequence length="62" mass="6764">MTILFQLALAALVILSFVMVIGVPVAYASPQDWDRSKQLIFLGSGLWIALVLVVGVLNFFVV</sequence>
<organism>
    <name type="scientific">Thermosynechococcus vestitus (strain NIES-2133 / IAM M-273 / BP-1)</name>
    <dbReference type="NCBI Taxonomy" id="197221"/>
    <lineage>
        <taxon>Bacteria</taxon>
        <taxon>Bacillati</taxon>
        <taxon>Cyanobacteriota</taxon>
        <taxon>Cyanophyceae</taxon>
        <taxon>Acaryochloridales</taxon>
        <taxon>Thermosynechococcaceae</taxon>
        <taxon>Thermosynechococcus</taxon>
    </lineage>
</organism>
<dbReference type="EMBL" id="BA000039">
    <property type="protein sequence ID" value="BAC09519.1"/>
    <property type="molecule type" value="Genomic_DNA"/>
</dbReference>
<dbReference type="RefSeq" id="NP_682757.1">
    <property type="nucleotide sequence ID" value="NC_004113.1"/>
</dbReference>
<dbReference type="RefSeq" id="WP_011057802.1">
    <property type="nucleotide sequence ID" value="NC_004113.1"/>
</dbReference>
<dbReference type="PDB" id="1S5L">
    <property type="method" value="X-ray"/>
    <property type="resolution" value="3.50 A"/>
    <property type="chains" value="Z/z=1-62"/>
</dbReference>
<dbReference type="PDB" id="2AXT">
    <property type="method" value="X-ray"/>
    <property type="resolution" value="3.00 A"/>
    <property type="chains" value="Z/z=1-62"/>
</dbReference>
<dbReference type="PDB" id="3KZI">
    <property type="method" value="X-ray"/>
    <property type="resolution" value="3.60 A"/>
    <property type="chains" value="Z=1-62"/>
</dbReference>
<dbReference type="PDB" id="4FBY">
    <property type="method" value="X-ray"/>
    <property type="resolution" value="6.56 A"/>
    <property type="chains" value="Z/l=1-62"/>
</dbReference>
<dbReference type="PDB" id="4IXQ">
    <property type="method" value="X-ray"/>
    <property type="resolution" value="5.70 A"/>
    <property type="chains" value="Z/z=1-62"/>
</dbReference>
<dbReference type="PDB" id="4IXR">
    <property type="method" value="X-ray"/>
    <property type="resolution" value="5.90 A"/>
    <property type="chains" value="Z/z=1-62"/>
</dbReference>
<dbReference type="PDB" id="4PBU">
    <property type="method" value="X-ray"/>
    <property type="resolution" value="5.00 A"/>
    <property type="chains" value="Z/z=1-62"/>
</dbReference>
<dbReference type="PDB" id="4PJ0">
    <property type="method" value="X-ray"/>
    <property type="resolution" value="2.44 A"/>
    <property type="chains" value="Z/z=1-62"/>
</dbReference>
<dbReference type="PDB" id="4RVY">
    <property type="method" value="X-ray"/>
    <property type="resolution" value="5.50 A"/>
    <property type="chains" value="Z/z=1-62"/>
</dbReference>
<dbReference type="PDB" id="4TNH">
    <property type="method" value="X-ray"/>
    <property type="resolution" value="4.90 A"/>
    <property type="chains" value="Z/z=1-62"/>
</dbReference>
<dbReference type="PDB" id="4TNI">
    <property type="method" value="X-ray"/>
    <property type="resolution" value="4.60 A"/>
    <property type="chains" value="Z/z=1-62"/>
</dbReference>
<dbReference type="PDB" id="4TNJ">
    <property type="method" value="X-ray"/>
    <property type="resolution" value="4.50 A"/>
    <property type="chains" value="Z/z=1-62"/>
</dbReference>
<dbReference type="PDB" id="4TNK">
    <property type="method" value="X-ray"/>
    <property type="resolution" value="5.20 A"/>
    <property type="chains" value="Z/z=1-62"/>
</dbReference>
<dbReference type="PDB" id="4V62">
    <property type="method" value="X-ray"/>
    <property type="resolution" value="2.90 A"/>
    <property type="chains" value="AZ/BZ=1-62"/>
</dbReference>
<dbReference type="PDB" id="4V82">
    <property type="method" value="X-ray"/>
    <property type="resolution" value="3.20 A"/>
    <property type="chains" value="AZ/BZ=1-62"/>
</dbReference>
<dbReference type="PDB" id="5E79">
    <property type="method" value="X-ray"/>
    <property type="resolution" value="3.50 A"/>
    <property type="chains" value="Z/z=1-62"/>
</dbReference>
<dbReference type="PDB" id="5E7C">
    <property type="method" value="X-ray"/>
    <property type="resolution" value="4.50 A"/>
    <property type="chains" value="Z/z=1-62"/>
</dbReference>
<dbReference type="PDB" id="5H2F">
    <property type="method" value="X-ray"/>
    <property type="resolution" value="2.20 A"/>
    <property type="chains" value="Z/z=1-62"/>
</dbReference>
<dbReference type="PDB" id="5KAF">
    <property type="method" value="X-ray"/>
    <property type="resolution" value="3.00 A"/>
    <property type="chains" value="Z/z=1-62"/>
</dbReference>
<dbReference type="PDB" id="5KAI">
    <property type="method" value="X-ray"/>
    <property type="resolution" value="2.80 A"/>
    <property type="chains" value="Z/z=1-62"/>
</dbReference>
<dbReference type="PDB" id="5MX2">
    <property type="method" value="X-ray"/>
    <property type="resolution" value="2.20 A"/>
    <property type="chains" value="Z/z=1-62"/>
</dbReference>
<dbReference type="PDB" id="5TIS">
    <property type="method" value="X-ray"/>
    <property type="resolution" value="2.25 A"/>
    <property type="chains" value="Z/z=1-62"/>
</dbReference>
<dbReference type="PDB" id="5ZZN">
    <property type="method" value="X-ray"/>
    <property type="resolution" value="2.10 A"/>
    <property type="chains" value="Z/z=1-62"/>
</dbReference>
<dbReference type="PDB" id="6DHE">
    <property type="method" value="X-ray"/>
    <property type="resolution" value="2.05 A"/>
    <property type="chains" value="Z/z=1-62"/>
</dbReference>
<dbReference type="PDB" id="6DHF">
    <property type="method" value="X-ray"/>
    <property type="resolution" value="2.08 A"/>
    <property type="chains" value="Z/z=1-62"/>
</dbReference>
<dbReference type="PDB" id="6DHG">
    <property type="method" value="X-ray"/>
    <property type="resolution" value="2.50 A"/>
    <property type="chains" value="Z/z=1-62"/>
</dbReference>
<dbReference type="PDB" id="6DHH">
    <property type="method" value="X-ray"/>
    <property type="resolution" value="2.20 A"/>
    <property type="chains" value="Z/z=1-62"/>
</dbReference>
<dbReference type="PDB" id="6DHO">
    <property type="method" value="X-ray"/>
    <property type="resolution" value="2.07 A"/>
    <property type="chains" value="Z/z=1-62"/>
</dbReference>
<dbReference type="PDB" id="6DHP">
    <property type="method" value="X-ray"/>
    <property type="resolution" value="2.04 A"/>
    <property type="chains" value="Z/z=1-62"/>
</dbReference>
<dbReference type="PDB" id="6W1O">
    <property type="method" value="X-ray"/>
    <property type="resolution" value="2.08 A"/>
    <property type="chains" value="Z/z=1-62"/>
</dbReference>
<dbReference type="PDB" id="6W1P">
    <property type="method" value="X-ray"/>
    <property type="resolution" value="2.26 A"/>
    <property type="chains" value="Z/z=1-62"/>
</dbReference>
<dbReference type="PDB" id="6W1Q">
    <property type="method" value="X-ray"/>
    <property type="resolution" value="2.27 A"/>
    <property type="chains" value="Z/z=1-62"/>
</dbReference>
<dbReference type="PDB" id="6W1R">
    <property type="method" value="X-ray"/>
    <property type="resolution" value="2.23 A"/>
    <property type="chains" value="Z/z=1-62"/>
</dbReference>
<dbReference type="PDB" id="6W1T">
    <property type="method" value="X-ray"/>
    <property type="resolution" value="2.01 A"/>
    <property type="chains" value="Z/z=1-62"/>
</dbReference>
<dbReference type="PDB" id="6W1U">
    <property type="method" value="X-ray"/>
    <property type="resolution" value="2.09 A"/>
    <property type="chains" value="Z/z=1-62"/>
</dbReference>
<dbReference type="PDB" id="6W1V">
    <property type="method" value="X-ray"/>
    <property type="resolution" value="2.09 A"/>
    <property type="chains" value="Z/z=1-62"/>
</dbReference>
<dbReference type="PDB" id="7NHO">
    <property type="method" value="EM"/>
    <property type="resolution" value="2.66 A"/>
    <property type="chains" value="Z=1-62"/>
</dbReference>
<dbReference type="PDB" id="7NHP">
    <property type="method" value="EM"/>
    <property type="resolution" value="2.72 A"/>
    <property type="chains" value="Z=1-62"/>
</dbReference>
<dbReference type="PDB" id="7NHQ">
    <property type="method" value="EM"/>
    <property type="resolution" value="2.68 A"/>
    <property type="chains" value="Z=1-62"/>
</dbReference>
<dbReference type="PDB" id="7RF1">
    <property type="method" value="X-ray"/>
    <property type="resolution" value="1.89 A"/>
    <property type="chains" value="Z/z=1-62"/>
</dbReference>
<dbReference type="PDB" id="7RF2">
    <property type="method" value="X-ray"/>
    <property type="resolution" value="2.08 A"/>
    <property type="chains" value="Z/z=1-62"/>
</dbReference>
<dbReference type="PDB" id="7RF3">
    <property type="method" value="X-ray"/>
    <property type="resolution" value="2.26 A"/>
    <property type="chains" value="Z/z=1-62"/>
</dbReference>
<dbReference type="PDB" id="7RF4">
    <property type="method" value="X-ray"/>
    <property type="resolution" value="2.27 A"/>
    <property type="chains" value="Z/z=1-62"/>
</dbReference>
<dbReference type="PDB" id="7RF5">
    <property type="method" value="X-ray"/>
    <property type="resolution" value="2.23 A"/>
    <property type="chains" value="Z/z=1-62"/>
</dbReference>
<dbReference type="PDB" id="7RF6">
    <property type="method" value="X-ray"/>
    <property type="resolution" value="2.01 A"/>
    <property type="chains" value="Z/z=1-62"/>
</dbReference>
<dbReference type="PDB" id="7RF7">
    <property type="method" value="X-ray"/>
    <property type="resolution" value="2.09 A"/>
    <property type="chains" value="Z/z=1-62"/>
</dbReference>
<dbReference type="PDB" id="7RF8">
    <property type="method" value="X-ray"/>
    <property type="resolution" value="2.09 A"/>
    <property type="chains" value="Z/z=1-62"/>
</dbReference>
<dbReference type="PDB" id="7YQ2">
    <property type="method" value="X-ray"/>
    <property type="resolution" value="1.90 A"/>
    <property type="chains" value="Z/z=1-62"/>
</dbReference>
<dbReference type="PDB" id="7YQ7">
    <property type="method" value="X-ray"/>
    <property type="resolution" value="1.90 A"/>
    <property type="chains" value="Z/z=1-62"/>
</dbReference>
<dbReference type="PDB" id="8EZ5">
    <property type="method" value="X-ray"/>
    <property type="resolution" value="2.09 A"/>
    <property type="chains" value="Z/z=1-62"/>
</dbReference>
<dbReference type="PDB" id="8F4C">
    <property type="method" value="X-ray"/>
    <property type="resolution" value="2.00 A"/>
    <property type="chains" value="Z/z=1-62"/>
</dbReference>
<dbReference type="PDB" id="8F4D">
    <property type="method" value="X-ray"/>
    <property type="resolution" value="2.15 A"/>
    <property type="chains" value="Z/z=1-62"/>
</dbReference>
<dbReference type="PDB" id="8F4E">
    <property type="method" value="X-ray"/>
    <property type="resolution" value="2.09 A"/>
    <property type="chains" value="Z/z=1-62"/>
</dbReference>
<dbReference type="PDB" id="8F4F">
    <property type="method" value="X-ray"/>
    <property type="resolution" value="2.03 A"/>
    <property type="chains" value="Z/z=1-62"/>
</dbReference>
<dbReference type="PDB" id="8F4G">
    <property type="method" value="X-ray"/>
    <property type="resolution" value="2.03 A"/>
    <property type="chains" value="Z/z=1-62"/>
</dbReference>
<dbReference type="PDB" id="8F4H">
    <property type="method" value="X-ray"/>
    <property type="resolution" value="2.10 A"/>
    <property type="chains" value="Z/z=1-62"/>
</dbReference>
<dbReference type="PDB" id="8F4I">
    <property type="method" value="X-ray"/>
    <property type="resolution" value="2.00 A"/>
    <property type="chains" value="Z/z=1-62"/>
</dbReference>
<dbReference type="PDB" id="8F4J">
    <property type="method" value="X-ray"/>
    <property type="resolution" value="2.00 A"/>
    <property type="chains" value="Z/z=1-62"/>
</dbReference>
<dbReference type="PDB" id="8F4K">
    <property type="method" value="X-ray"/>
    <property type="resolution" value="2.16 A"/>
    <property type="chains" value="Z/z=1-62"/>
</dbReference>
<dbReference type="PDB" id="9EVX">
    <property type="method" value="EM"/>
    <property type="resolution" value="1.71 A"/>
    <property type="chains" value="Z/z=1-62"/>
</dbReference>
<dbReference type="PDBsum" id="1S5L"/>
<dbReference type="PDBsum" id="2AXT"/>
<dbReference type="PDBsum" id="3KZI"/>
<dbReference type="PDBsum" id="4FBY"/>
<dbReference type="PDBsum" id="4IXQ"/>
<dbReference type="PDBsum" id="4IXR"/>
<dbReference type="PDBsum" id="4PBU"/>
<dbReference type="PDBsum" id="4PJ0"/>
<dbReference type="PDBsum" id="4RVY"/>
<dbReference type="PDBsum" id="4TNH"/>
<dbReference type="PDBsum" id="4TNI"/>
<dbReference type="PDBsum" id="4TNJ"/>
<dbReference type="PDBsum" id="4TNK"/>
<dbReference type="PDBsum" id="4V62"/>
<dbReference type="PDBsum" id="4V82"/>
<dbReference type="PDBsum" id="5E79"/>
<dbReference type="PDBsum" id="5E7C"/>
<dbReference type="PDBsum" id="5H2F"/>
<dbReference type="PDBsum" id="5KAF"/>
<dbReference type="PDBsum" id="5KAI"/>
<dbReference type="PDBsum" id="5MX2"/>
<dbReference type="PDBsum" id="5TIS"/>
<dbReference type="PDBsum" id="5ZZN"/>
<dbReference type="PDBsum" id="6DHE"/>
<dbReference type="PDBsum" id="6DHF"/>
<dbReference type="PDBsum" id="6DHG"/>
<dbReference type="PDBsum" id="6DHH"/>
<dbReference type="PDBsum" id="6DHO"/>
<dbReference type="PDBsum" id="6DHP"/>
<dbReference type="PDBsum" id="6W1O"/>
<dbReference type="PDBsum" id="6W1P"/>
<dbReference type="PDBsum" id="6W1Q"/>
<dbReference type="PDBsum" id="6W1R"/>
<dbReference type="PDBsum" id="6W1T"/>
<dbReference type="PDBsum" id="6W1U"/>
<dbReference type="PDBsum" id="6W1V"/>
<dbReference type="PDBsum" id="7NHO"/>
<dbReference type="PDBsum" id="7NHP"/>
<dbReference type="PDBsum" id="7NHQ"/>
<dbReference type="PDBsum" id="7RF1"/>
<dbReference type="PDBsum" id="7RF2"/>
<dbReference type="PDBsum" id="7RF3"/>
<dbReference type="PDBsum" id="7RF4"/>
<dbReference type="PDBsum" id="7RF5"/>
<dbReference type="PDBsum" id="7RF6"/>
<dbReference type="PDBsum" id="7RF7"/>
<dbReference type="PDBsum" id="7RF8"/>
<dbReference type="PDBsum" id="7YQ2"/>
<dbReference type="PDBsum" id="7YQ7"/>
<dbReference type="PDBsum" id="8EZ5"/>
<dbReference type="PDBsum" id="8F4C"/>
<dbReference type="PDBsum" id="8F4D"/>
<dbReference type="PDBsum" id="8F4E"/>
<dbReference type="PDBsum" id="8F4F"/>
<dbReference type="PDBsum" id="8F4G"/>
<dbReference type="PDBsum" id="8F4H"/>
<dbReference type="PDBsum" id="8F4I"/>
<dbReference type="PDBsum" id="8F4J"/>
<dbReference type="PDBsum" id="8F4K"/>
<dbReference type="PDBsum" id="9EVX"/>
<dbReference type="EMDB" id="EMD-12335"/>
<dbReference type="EMDB" id="EMD-12336"/>
<dbReference type="EMDB" id="EMD-12337"/>
<dbReference type="EMDB" id="EMD-50019"/>
<dbReference type="SMR" id="Q8DHJ2"/>
<dbReference type="DIP" id="DIP-48504N"/>
<dbReference type="IntAct" id="Q8DHJ2">
    <property type="interactions" value="1"/>
</dbReference>
<dbReference type="STRING" id="197221.gene:10748574"/>
<dbReference type="EnsemblBacteria" id="BAC09519">
    <property type="protein sequence ID" value="BAC09519"/>
    <property type="gene ID" value="BAC09519"/>
</dbReference>
<dbReference type="KEGG" id="tel:tsr1967"/>
<dbReference type="PATRIC" id="fig|197221.4.peg.2057"/>
<dbReference type="eggNOG" id="ENOG5032ZB0">
    <property type="taxonomic scope" value="Bacteria"/>
</dbReference>
<dbReference type="EvolutionaryTrace" id="Q8DHJ2"/>
<dbReference type="Proteomes" id="UP000000440">
    <property type="component" value="Chromosome"/>
</dbReference>
<dbReference type="GO" id="GO:0009539">
    <property type="term" value="C:photosystem II reaction center"/>
    <property type="evidence" value="ECO:0007669"/>
    <property type="project" value="InterPro"/>
</dbReference>
<dbReference type="GO" id="GO:0031676">
    <property type="term" value="C:plasma membrane-derived thylakoid membrane"/>
    <property type="evidence" value="ECO:0007669"/>
    <property type="project" value="UniProtKB-SubCell"/>
</dbReference>
<dbReference type="GO" id="GO:0015979">
    <property type="term" value="P:photosynthesis"/>
    <property type="evidence" value="ECO:0007669"/>
    <property type="project" value="UniProtKB-UniRule"/>
</dbReference>
<dbReference type="GO" id="GO:0042549">
    <property type="term" value="P:photosystem II stabilization"/>
    <property type="evidence" value="ECO:0007669"/>
    <property type="project" value="InterPro"/>
</dbReference>
<dbReference type="Gene3D" id="1.10.287.740">
    <property type="entry name" value="Photosystem II PsbZ, reaction centre"/>
    <property type="match status" value="1"/>
</dbReference>
<dbReference type="HAMAP" id="MF_00644">
    <property type="entry name" value="PSII_PsbZ"/>
    <property type="match status" value="1"/>
</dbReference>
<dbReference type="InterPro" id="IPR002644">
    <property type="entry name" value="PSII_PsbZ"/>
</dbReference>
<dbReference type="InterPro" id="IPR036512">
    <property type="entry name" value="PSII_PsbZ_sf"/>
</dbReference>
<dbReference type="NCBIfam" id="TIGR03043">
    <property type="entry name" value="PS_II_psbZ"/>
    <property type="match status" value="1"/>
</dbReference>
<dbReference type="PANTHER" id="PTHR34971">
    <property type="entry name" value="PHOTOSYSTEM II REACTION CENTER PROTEIN Z"/>
    <property type="match status" value="1"/>
</dbReference>
<dbReference type="PANTHER" id="PTHR34971:SF2">
    <property type="entry name" value="PHOTOSYSTEM II REACTION CENTER PROTEIN Z"/>
    <property type="match status" value="1"/>
</dbReference>
<dbReference type="Pfam" id="PF01737">
    <property type="entry name" value="Ycf9"/>
    <property type="match status" value="1"/>
</dbReference>
<dbReference type="SUPFAM" id="SSF161055">
    <property type="entry name" value="PsbZ-like"/>
    <property type="match status" value="1"/>
</dbReference>
<reference key="1">
    <citation type="journal article" date="2002" name="DNA Res.">
        <title>Complete genome structure of the thermophilic cyanobacterium Thermosynechococcus elongatus BP-1.</title>
        <authorList>
            <person name="Nakamura Y."/>
            <person name="Kaneko T."/>
            <person name="Sato S."/>
            <person name="Ikeuchi M."/>
            <person name="Katoh H."/>
            <person name="Sasamoto S."/>
            <person name="Watanabe A."/>
            <person name="Iriguchi M."/>
            <person name="Kawashima K."/>
            <person name="Kimura T."/>
            <person name="Kishida Y."/>
            <person name="Kiyokawa C."/>
            <person name="Kohara M."/>
            <person name="Matsumoto M."/>
            <person name="Matsuno A."/>
            <person name="Nakazaki N."/>
            <person name="Shimpo S."/>
            <person name="Sugimoto M."/>
            <person name="Takeuchi C."/>
            <person name="Yamada M."/>
            <person name="Tabata S."/>
        </authorList>
    </citation>
    <scope>NUCLEOTIDE SEQUENCE [LARGE SCALE GENOMIC DNA]</scope>
    <source>
        <strain>NIES-2133 / IAM M-273 / BP-1</strain>
    </source>
</reference>
<reference key="2">
    <citation type="journal article" date="2007" name="Biochim. Biophys. Acta">
        <title>Ycf12 is a core subunit in the photosystem II complex.</title>
        <authorList>
            <person name="Kashino Y."/>
            <person name="Takahashi T."/>
            <person name="Inoue-Kashino N."/>
            <person name="Ban A."/>
            <person name="Ikeda Y."/>
            <person name="Satoh K."/>
            <person name="Sugiura M."/>
        </authorList>
    </citation>
    <scope>PROTEIN SEQUENCE OF 1-15</scope>
    <scope>COFACTOR</scope>
    <scope>SUBUNIT</scope>
    <scope>SUBCELLULAR LOCATION</scope>
</reference>
<reference key="3">
    <citation type="journal article" date="2007" name="Plant Cell Physiol.">
        <title>Absence of the PsbZ subunit prevents association of PsbK and Ycf12 with the PSII complex in the thermophilic cyanobacterium Thermosynechococcus elongatus BP-1.</title>
        <authorList>
            <person name="Iwai M."/>
            <person name="Suzuki T."/>
            <person name="Dohmae N."/>
            <person name="Inoue Y."/>
            <person name="Ikeuchi M."/>
        </authorList>
    </citation>
    <scope>PROTEIN SEQUENCE OF 1-10</scope>
    <scope>FUNCTION</scope>
    <scope>COFACTOR</scope>
    <scope>SUBUNIT</scope>
    <scope>SUBCELLULAR LOCATION</scope>
    <scope>DISRUPTION PHENOTYPE</scope>
</reference>
<reference evidence="14" key="4">
    <citation type="journal article" date="2004" name="Science">
        <title>Architecture of the photosynthetic oxygen-evolving center.</title>
        <authorList>
            <person name="Ferreira K.N."/>
            <person name="Iverson T.M."/>
            <person name="Maghlaoui K."/>
            <person name="Barber J."/>
            <person name="Iwata S."/>
        </authorList>
    </citation>
    <scope>X-RAY CRYSTALLOGRAPHY (3.50 ANGSTROMS) IN PHOTOSYSTEM II</scope>
    <scope>COFACTOR</scope>
    <scope>SUBUNIT</scope>
    <scope>SUBCELLULAR LOCATION</scope>
</reference>
<reference key="5">
    <citation type="journal article" date="2005" name="Nature">
        <title>Towards complete cofactor arrangement in the 3.0 A resolution structure of photosystem II.</title>
        <authorList>
            <person name="Loll B."/>
            <person name="Kern J."/>
            <person name="Saenger W."/>
            <person name="Zouni A."/>
            <person name="Biesiadka J."/>
        </authorList>
    </citation>
    <scope>X-RAY CRYSTALLOGRAPHY (3.00 ANGSTROMS) IN PHOTOSYSTEM II</scope>
    <scope>COFACTOR</scope>
    <scope>SUBUNIT</scope>
    <scope>SUBCELLULAR LOCATION</scope>
    <source>
        <strain>NIES-2133 / IAM M-273 / BP-1</strain>
    </source>
</reference>
<reference key="6">
    <citation type="journal article" date="2009" name="Nat. Struct. Mol. Biol.">
        <title>Cyanobacterial photosystem II at 2.9-A resolution and the role of quinones, lipids, channels and chloride.</title>
        <authorList>
            <person name="Guskov A."/>
            <person name="Kern J."/>
            <person name="Gabdulkhakov A."/>
            <person name="Broser M."/>
            <person name="Zouni A."/>
            <person name="Saenger W."/>
        </authorList>
    </citation>
    <scope>X-RAY CRYSTALLOGRAPHY (2.90 ANGSTROMS) IN PHOTOSYSTEM II</scope>
    <scope>COFACTOR</scope>
    <scope>SUBUNIT</scope>
    <scope>SUBCELLULAR LOCATION</scope>
    <scope>FORMYLATION AT MET-1</scope>
    <scope>MASS SPECTROMETRY</scope>
    <scope>TOPOLOGY</scope>
    <source>
        <strain>NIES-2133 / IAM M-273 / BP-1</strain>
    </source>
</reference>
<reference key="7">
    <citation type="journal article" date="2010" name="J. Biol. Chem.">
        <title>Crystal structure of monomeric photosystem II from Thermosynechococcus elongatus at 3.6 A resolution.</title>
        <authorList>
            <person name="Broser M."/>
            <person name="Gabdulkhakov A."/>
            <person name="Kern J."/>
            <person name="Guskov A."/>
            <person name="Muh F."/>
            <person name="Saenger W."/>
            <person name="Zouni A."/>
        </authorList>
    </citation>
    <scope>X-RAY CRYSTALLOGRAPHY (3.60 ANGSTROMS) IN PHOTOSYSTEM II</scope>
    <scope>FUNCTION</scope>
    <scope>COFACTOR</scope>
    <scope>SUBUNIT</scope>
    <scope>SUBCELLULAR LOCATION</scope>
    <scope>FORMYLATION AT MET-1</scope>
    <scope>MASS SPECTROMETRY</scope>
    <source>
        <strain>NIES-2133 / IAM M-273 / BP-1</strain>
    </source>
</reference>
<reference key="8">
    <citation type="journal article" date="2011" name="J. Biol. Chem.">
        <title>Structural basis of cyanobacterial photosystem II inhibition by the herbicide terbutryn.</title>
        <authorList>
            <person name="Broser M."/>
            <person name="Glockner C."/>
            <person name="Gabdulkhakov A."/>
            <person name="Guskov A."/>
            <person name="Buchta J."/>
            <person name="Kern J."/>
            <person name="Muh F."/>
            <person name="Dau H."/>
            <person name="Saenger W."/>
            <person name="Zouni A."/>
        </authorList>
    </citation>
    <scope>X-RAY CRYSTALLOGRAPHY (3.20 ANGSTROMS) IN PHOTOSYSTEM II</scope>
    <scope>FUNCTION</scope>
    <scope>COFACTOR</scope>
    <scope>SUBUNIT</scope>
    <scope>SUBCELLULAR LOCATION</scope>
</reference>
<reference key="9">
    <citation type="journal article" date="2012" name="Proc. Natl. Acad. Sci. U.S.A.">
        <title>Room temperature femtosecond X-ray diffraction of photosystem II microcrystals.</title>
        <authorList>
            <person name="Kern J."/>
            <person name="Alonso-Mori R."/>
            <person name="Hellmich J."/>
            <person name="Tran R."/>
            <person name="Hattne J."/>
            <person name="Laksmono H."/>
            <person name="Glockner C."/>
            <person name="Echols N."/>
            <person name="Sierra R.G."/>
            <person name="Sellberg J."/>
            <person name="Lassalle-Kaiser B."/>
            <person name="Gildea R.J."/>
            <person name="Glatzel P."/>
            <person name="Grosse-Kunstleve R.W."/>
            <person name="Latimer M.J."/>
            <person name="McQueen T.A."/>
            <person name="DiFiore D."/>
            <person name="Fry A.R."/>
            <person name="Messerschmidt M."/>
            <person name="Miahnahri A."/>
            <person name="Schafer D.W."/>
            <person name="Seibert M.M."/>
            <person name="Sokaras D."/>
            <person name="Weng T.C."/>
            <person name="Zwart P.H."/>
            <person name="White W.E."/>
            <person name="Adams P.D."/>
            <person name="Bogan M.J."/>
            <person name="Boutet S."/>
            <person name="Williams G.J."/>
            <person name="Messinger J."/>
            <person name="Sauter N.K."/>
            <person name="Zouni A."/>
            <person name="Bergmann U."/>
            <person name="Yano J."/>
            <person name="Yachandra V.K."/>
        </authorList>
    </citation>
    <scope>X-RAY CRYSTALLOGRAPHY (6.56 ANGSTROMS) IN PHOTOSYSTEM II</scope>
    <scope>COFACTOR</scope>
    <scope>SUBUNIT</scope>
    <scope>SUBCELLULAR LOCATION</scope>
    <source>
        <strain>NIES-2133 / IAM M-273 / BP-1</strain>
    </source>
</reference>
<reference key="10">
    <citation type="journal article" date="2013" name="Science">
        <title>Simultaneous femtosecond X-ray spectroscopy and diffraction of photosystem II at room temperature.</title>
        <authorList>
            <person name="Kern J."/>
            <person name="Alonso-Mori R."/>
            <person name="Tran R."/>
            <person name="Hattne J."/>
            <person name="Gildea R.J."/>
            <person name="Echols N."/>
            <person name="Glockner C."/>
            <person name="Hellmich J."/>
            <person name="Laksmono H."/>
            <person name="Sierra R.G."/>
            <person name="Lassalle-Kaiser B."/>
            <person name="Koroidov S."/>
            <person name="Lampe A."/>
            <person name="Han G."/>
            <person name="Gul S."/>
            <person name="Difiore D."/>
            <person name="Milathianaki D."/>
            <person name="Fry A.R."/>
            <person name="Miahnahri A."/>
            <person name="Schafer D.W."/>
            <person name="Messerschmidt M."/>
            <person name="Seibert M.M."/>
            <person name="Koglin J.E."/>
            <person name="Sokaras D."/>
            <person name="Weng T.C."/>
            <person name="Sellberg J."/>
            <person name="Latimer M.J."/>
            <person name="Grosse-Kunstleve R.W."/>
            <person name="Zwart P.H."/>
            <person name="White W.E."/>
            <person name="Glatzel P."/>
            <person name="Adams P.D."/>
            <person name="Bogan M.J."/>
            <person name="Williams G.J."/>
            <person name="Boutet S."/>
            <person name="Messinger J."/>
            <person name="Zouni A."/>
            <person name="Sauter N.K."/>
            <person name="Yachandra V.K."/>
            <person name="Bergmann U."/>
            <person name="Yano J."/>
        </authorList>
    </citation>
    <scope>X-RAY CRYSTALLOGRAPHY (5.70 ANGSTROMS) IN PHOTOSYSTEM II</scope>
    <scope>COFACTOR</scope>
    <scope>SUBUNIT</scope>
    <scope>SUBCELLULAR LOCATION</scope>
    <source>
        <strain>NIES-2133 / IAM M-273 / BP-1</strain>
    </source>
</reference>
<reference key="11">
    <citation type="journal article" date="2014" name="Nature">
        <title>Serial time-resolved crystallography of photosystem II using a femtosecond X-ray laser.</title>
        <authorList>
            <person name="Kupitz C."/>
            <person name="Basu S."/>
            <person name="Grotjohann I."/>
            <person name="Fromme R."/>
            <person name="Zatsepin N.A."/>
            <person name="Rendek K.N."/>
            <person name="Hunter M.S."/>
            <person name="Shoeman R.L."/>
            <person name="White T.A."/>
            <person name="Wang D."/>
            <person name="James D."/>
            <person name="Yang J.H."/>
            <person name="Cobb D.E."/>
            <person name="Reeder B."/>
            <person name="Sierra R.G."/>
            <person name="Liu H."/>
            <person name="Barty A."/>
            <person name="Aquila A.L."/>
            <person name="Deponte D."/>
            <person name="Kirian R.A."/>
            <person name="Bari S."/>
            <person name="Bergkamp J.J."/>
            <person name="Beyerlein K.R."/>
            <person name="Bogan M.J."/>
            <person name="Caleman C."/>
            <person name="Chao T.C."/>
            <person name="Conrad C.E."/>
            <person name="Davis K.M."/>
            <person name="Fleckenstein H."/>
            <person name="Galli L."/>
            <person name="Hau-Riege S.P."/>
            <person name="Kassemeyer S."/>
            <person name="Laksmono H."/>
            <person name="Liang M."/>
            <person name="Lomb L."/>
            <person name="Marchesini S."/>
            <person name="Martin A.V."/>
            <person name="Messerschmidt M."/>
            <person name="Milathianaki D."/>
            <person name="Nass K."/>
            <person name="Ros A."/>
            <person name="Roy-Chowdhury S."/>
            <person name="Schmidt K."/>
            <person name="Seibert M."/>
            <person name="Steinbrener J."/>
            <person name="Stellato F."/>
            <person name="Yan L."/>
            <person name="Yoon C."/>
            <person name="Moore T.A."/>
            <person name="Moore A.L."/>
            <person name="Pushkar Y."/>
            <person name="Williams G.J."/>
            <person name="Boutet S."/>
            <person name="Doak R.B."/>
            <person name="Weierstall U."/>
            <person name="Frank M."/>
            <person name="Chapman H.N."/>
            <person name="Spence J.C."/>
            <person name="Fromme P."/>
        </authorList>
    </citation>
    <scope>X-RAY CRYSTALLOGRAPHY (5.00 ANGSTROMS) IN PHOTOSYSTEM II</scope>
    <scope>COFACTOR</scope>
    <scope>SUBUNIT</scope>
    <scope>SUBCELLULAR LOCATION</scope>
    <source>
        <strain>NIES-2133 / IAM M-273 / BP-1</strain>
    </source>
</reference>
<reference key="12">
    <citation type="journal article" date="2014" name="Nat. Commun.">
        <title>Taking snapshots of photosynthetic water oxidation using femtosecond X-ray diffraction and spectroscopy.</title>
        <authorList>
            <person name="Kern J."/>
            <person name="Tran R."/>
            <person name="Alonso-Mori R."/>
            <person name="Koroidov S."/>
            <person name="Echols N."/>
            <person name="Hattne J."/>
            <person name="Ibrahim M."/>
            <person name="Gul S."/>
            <person name="Laksmono H."/>
            <person name="Sierra R.G."/>
            <person name="Gildea R.J."/>
            <person name="Han G."/>
            <person name="Hellmich J."/>
            <person name="Lassalle-Kaiser B."/>
            <person name="Chatterjee R."/>
            <person name="Brewster A.S."/>
            <person name="Stan C.A."/>
            <person name="Gloeckner C."/>
            <person name="Lampe A."/>
            <person name="DiFiore D."/>
            <person name="Milathianaki D."/>
            <person name="Fry A.R."/>
            <person name="Seibert M.M."/>
            <person name="Koglin J.E."/>
            <person name="Gallo E."/>
            <person name="Uhlig J."/>
            <person name="Sokaras D."/>
            <person name="Weng T.C."/>
            <person name="Zwart P.H."/>
            <person name="Skinner D.E."/>
            <person name="Bogan M.J."/>
            <person name="Messerschmidt M."/>
            <person name="Glatzel P."/>
            <person name="Williams G.J."/>
            <person name="Boutet S."/>
            <person name="Adams P.D."/>
            <person name="Zouni A."/>
            <person name="Messinger J."/>
            <person name="Sauter N.K."/>
            <person name="Bergmann U."/>
            <person name="Yano J."/>
            <person name="Yachandra V.K."/>
        </authorList>
    </citation>
    <scope>X-RAY CRYSTALLOGRAPHY (4.50 ANGSTROMS) IN PHOTOSYSTEM II</scope>
    <scope>FUNCTION</scope>
    <scope>COFACTOR</scope>
    <scope>SUBUNIT</scope>
    <scope>SUBCELLULAR LOCATION</scope>
    <source>
        <strain>NIES-2133 / IAM M-273 / BP-1</strain>
    </source>
</reference>
<reference evidence="15 16 17" key="13">
    <citation type="journal article" date="2021" name="Nat. Plants">
        <title>Structural insights into photosystem II assembly.</title>
        <authorList>
            <person name="Zabret J."/>
            <person name="Bohn S."/>
            <person name="Schuller S.K."/>
            <person name="Arnolds O."/>
            <person name="Moller M."/>
            <person name="Meier-Credo J."/>
            <person name="Liauw P."/>
            <person name="Chan A."/>
            <person name="Tajkhorshid E."/>
            <person name="Langer J.D."/>
            <person name="Stoll R."/>
            <person name="Krieger-Liszkay A."/>
            <person name="Engel B.D."/>
            <person name="Rudack T."/>
            <person name="Schuller J.M."/>
            <person name="Nowaczyk M.M."/>
        </authorList>
    </citation>
    <scope>STRUCTURE BY ELECTRON MICROSCOPY (2.68 ANGSTROMS) IN PSII-I ASSEMBLY COMPLEX</scope>
    <scope>SUBUNIT</scope>
    <scope>SUBCELLULAR LOCATION</scope>
    <scope>TOPOLOGY</scope>
    <source>
        <strain>NIES-2133 / IAM M-273 / BP-1</strain>
    </source>
</reference>
<proteinExistence type="evidence at protein level"/>
<feature type="chain" id="PRO_0000217733" description="Photosystem II reaction center protein Z">
    <location>
        <begin position="1"/>
        <end position="62"/>
    </location>
</feature>
<feature type="topological domain" description="Lumenal">
    <location>
        <begin position="1"/>
        <end position="4"/>
    </location>
</feature>
<feature type="transmembrane region" description="Helical" evidence="13 17">
    <location>
        <begin position="5"/>
        <end position="25"/>
    </location>
</feature>
<feature type="topological domain" description="Cytoplasmic" evidence="13 17">
    <location>
        <begin position="26"/>
        <end position="36"/>
    </location>
</feature>
<feature type="transmembrane region" description="Helical" evidence="13 17">
    <location>
        <begin position="37"/>
        <end position="58"/>
    </location>
</feature>
<feature type="topological domain" description="Lumenal" evidence="13 17">
    <location>
        <begin position="59"/>
        <end position="62"/>
    </location>
</feature>
<feature type="modified residue" description="N-formylmethionine" evidence="6 7">
    <location>
        <position position="1"/>
    </location>
</feature>
<feature type="helix" evidence="18">
    <location>
        <begin position="2"/>
        <end position="28"/>
    </location>
</feature>
<feature type="strand" evidence="19">
    <location>
        <begin position="30"/>
        <end position="32"/>
    </location>
</feature>
<feature type="helix" evidence="18">
    <location>
        <begin position="33"/>
        <end position="61"/>
    </location>
</feature>